<feature type="chain" id="PRO_1000128110" description="Small ribosomal subunit protein uS9">
    <location>
        <begin position="1"/>
        <end position="139"/>
    </location>
</feature>
<gene>
    <name evidence="1" type="primary">rpsI</name>
    <name type="ordered locus">CbuG_0129</name>
</gene>
<organism>
    <name type="scientific">Coxiella burnetii (strain CbuG_Q212)</name>
    <name type="common">Coxiella burnetii (strain Q212)</name>
    <dbReference type="NCBI Taxonomy" id="434923"/>
    <lineage>
        <taxon>Bacteria</taxon>
        <taxon>Pseudomonadati</taxon>
        <taxon>Pseudomonadota</taxon>
        <taxon>Gammaproteobacteria</taxon>
        <taxon>Legionellales</taxon>
        <taxon>Coxiellaceae</taxon>
        <taxon>Coxiella</taxon>
    </lineage>
</organism>
<keyword id="KW-0687">Ribonucleoprotein</keyword>
<keyword id="KW-0689">Ribosomal protein</keyword>
<name>RS9_COXB2</name>
<reference key="1">
    <citation type="journal article" date="2009" name="Infect. Immun.">
        <title>Comparative genomics reveal extensive transposon-mediated genomic plasticity and diversity among potential effector proteins within the genus Coxiella.</title>
        <authorList>
            <person name="Beare P.A."/>
            <person name="Unsworth N."/>
            <person name="Andoh M."/>
            <person name="Voth D.E."/>
            <person name="Omsland A."/>
            <person name="Gilk S.D."/>
            <person name="Williams K.P."/>
            <person name="Sobral B.W."/>
            <person name="Kupko J.J. III"/>
            <person name="Porcella S.F."/>
            <person name="Samuel J.E."/>
            <person name="Heinzen R.A."/>
        </authorList>
    </citation>
    <scope>NUCLEOTIDE SEQUENCE [LARGE SCALE GENOMIC DNA]</scope>
    <source>
        <strain>CbuG_Q212</strain>
    </source>
</reference>
<proteinExistence type="inferred from homology"/>
<dbReference type="EMBL" id="CP001019">
    <property type="protein sequence ID" value="ACJ17580.1"/>
    <property type="molecule type" value="Genomic_DNA"/>
</dbReference>
<dbReference type="RefSeq" id="WP_005773029.1">
    <property type="nucleotide sequence ID" value="NC_011527.1"/>
</dbReference>
<dbReference type="SMR" id="B6J2V0"/>
<dbReference type="KEGG" id="cbg:CbuG_0129"/>
<dbReference type="HOGENOM" id="CLU_046483_2_1_6"/>
<dbReference type="GO" id="GO:0022627">
    <property type="term" value="C:cytosolic small ribosomal subunit"/>
    <property type="evidence" value="ECO:0007669"/>
    <property type="project" value="TreeGrafter"/>
</dbReference>
<dbReference type="GO" id="GO:0003723">
    <property type="term" value="F:RNA binding"/>
    <property type="evidence" value="ECO:0007669"/>
    <property type="project" value="TreeGrafter"/>
</dbReference>
<dbReference type="GO" id="GO:0003735">
    <property type="term" value="F:structural constituent of ribosome"/>
    <property type="evidence" value="ECO:0007669"/>
    <property type="project" value="InterPro"/>
</dbReference>
<dbReference type="GO" id="GO:0006412">
    <property type="term" value="P:translation"/>
    <property type="evidence" value="ECO:0007669"/>
    <property type="project" value="UniProtKB-UniRule"/>
</dbReference>
<dbReference type="FunFam" id="3.30.230.10:FF:000001">
    <property type="entry name" value="30S ribosomal protein S9"/>
    <property type="match status" value="1"/>
</dbReference>
<dbReference type="Gene3D" id="3.30.230.10">
    <property type="match status" value="1"/>
</dbReference>
<dbReference type="HAMAP" id="MF_00532_B">
    <property type="entry name" value="Ribosomal_uS9_B"/>
    <property type="match status" value="1"/>
</dbReference>
<dbReference type="InterPro" id="IPR020568">
    <property type="entry name" value="Ribosomal_Su5_D2-typ_SF"/>
</dbReference>
<dbReference type="InterPro" id="IPR000754">
    <property type="entry name" value="Ribosomal_uS9"/>
</dbReference>
<dbReference type="InterPro" id="IPR023035">
    <property type="entry name" value="Ribosomal_uS9_bac/plastid"/>
</dbReference>
<dbReference type="InterPro" id="IPR020574">
    <property type="entry name" value="Ribosomal_uS9_CS"/>
</dbReference>
<dbReference type="InterPro" id="IPR014721">
    <property type="entry name" value="Ribsml_uS5_D2-typ_fold_subgr"/>
</dbReference>
<dbReference type="NCBIfam" id="NF001099">
    <property type="entry name" value="PRK00132.1"/>
    <property type="match status" value="1"/>
</dbReference>
<dbReference type="PANTHER" id="PTHR21569">
    <property type="entry name" value="RIBOSOMAL PROTEIN S9"/>
    <property type="match status" value="1"/>
</dbReference>
<dbReference type="PANTHER" id="PTHR21569:SF1">
    <property type="entry name" value="SMALL RIBOSOMAL SUBUNIT PROTEIN US9M"/>
    <property type="match status" value="1"/>
</dbReference>
<dbReference type="Pfam" id="PF00380">
    <property type="entry name" value="Ribosomal_S9"/>
    <property type="match status" value="1"/>
</dbReference>
<dbReference type="SUPFAM" id="SSF54211">
    <property type="entry name" value="Ribosomal protein S5 domain 2-like"/>
    <property type="match status" value="1"/>
</dbReference>
<dbReference type="PROSITE" id="PS00360">
    <property type="entry name" value="RIBOSOMAL_S9"/>
    <property type="match status" value="1"/>
</dbReference>
<sequence length="139" mass="15304">MAQAAKKQNLGTGRRKTSSARVFLRSGTGQIIINGLPLDEYFGRETARMVVRQPLVKLDVQSRFDVYATVQGGGDSGQAGAIRHGITRALIQYDEEGGEGGTWRSTLRKAGFVTRDPRMVERKKVGLHGARRGTQFSKR</sequence>
<accession>B6J2V0</accession>
<comment type="similarity">
    <text evidence="1">Belongs to the universal ribosomal protein uS9 family.</text>
</comment>
<protein>
    <recommendedName>
        <fullName evidence="1">Small ribosomal subunit protein uS9</fullName>
    </recommendedName>
    <alternativeName>
        <fullName evidence="2">30S ribosomal protein S9</fullName>
    </alternativeName>
</protein>
<evidence type="ECO:0000255" key="1">
    <source>
        <dbReference type="HAMAP-Rule" id="MF_00532"/>
    </source>
</evidence>
<evidence type="ECO:0000305" key="2"/>